<proteinExistence type="evidence at protein level"/>
<reference key="1">
    <citation type="journal article" date="2003" name="Nat. Genet.">
        <title>Comparative analysis of the genome sequences of Bordetella pertussis, Bordetella parapertussis and Bordetella bronchiseptica.</title>
        <authorList>
            <person name="Parkhill J."/>
            <person name="Sebaihia M."/>
            <person name="Preston A."/>
            <person name="Murphy L.D."/>
            <person name="Thomson N.R."/>
            <person name="Harris D.E."/>
            <person name="Holden M.T.G."/>
            <person name="Churcher C.M."/>
            <person name="Bentley S.D."/>
            <person name="Mungall K.L."/>
            <person name="Cerdeno-Tarraga A.-M."/>
            <person name="Temple L."/>
            <person name="James K.D."/>
            <person name="Harris B."/>
            <person name="Quail M.A."/>
            <person name="Achtman M."/>
            <person name="Atkin R."/>
            <person name="Baker S."/>
            <person name="Basham D."/>
            <person name="Bason N."/>
            <person name="Cherevach I."/>
            <person name="Chillingworth T."/>
            <person name="Collins M."/>
            <person name="Cronin A."/>
            <person name="Davis P."/>
            <person name="Doggett J."/>
            <person name="Feltwell T."/>
            <person name="Goble A."/>
            <person name="Hamlin N."/>
            <person name="Hauser H."/>
            <person name="Holroyd S."/>
            <person name="Jagels K."/>
            <person name="Leather S."/>
            <person name="Moule S."/>
            <person name="Norberczak H."/>
            <person name="O'Neil S."/>
            <person name="Ormond D."/>
            <person name="Price C."/>
            <person name="Rabbinowitsch E."/>
            <person name="Rutter S."/>
            <person name="Sanders M."/>
            <person name="Saunders D."/>
            <person name="Seeger K."/>
            <person name="Sharp S."/>
            <person name="Simmonds M."/>
            <person name="Skelton J."/>
            <person name="Squares R."/>
            <person name="Squares S."/>
            <person name="Stevens K."/>
            <person name="Unwin L."/>
            <person name="Whitehead S."/>
            <person name="Barrell B.G."/>
            <person name="Maskell D.J."/>
        </authorList>
    </citation>
    <scope>NUCLEOTIDE SEQUENCE [LARGE SCALE GENOMIC DNA]</scope>
    <source>
        <strain>ATCC BAA-588 / NCTC 13252 / RB50</strain>
    </source>
</reference>
<reference key="2">
    <citation type="journal article" date="2016" name="Biochemistry">
        <title>Structural and Biochemical Characterization of 6-Hydroxynicotinic Acid 3-Monooxygenase, A Novel Decarboxylative Hydroxylase Involved in Aerobic Nicotinate Degradation.</title>
        <authorList>
            <person name="Hicks K.A."/>
            <person name="Yuen M.E."/>
            <person name="Zhen W.F."/>
            <person name="Gerwig T.J."/>
            <person name="Story R.W."/>
            <person name="Kopp M.C."/>
            <person name="Snider M.J."/>
        </authorList>
    </citation>
    <scope>FUNCTION</scope>
    <scope>CATALYTIC ACTIVITY</scope>
    <scope>BIOPHYSICOCHEMICAL PROPERTIES</scope>
    <scope>ACTIVITY REGULATION</scope>
    <scope>SUBUNIT</scope>
    <scope>PATHWAY</scope>
    <source>
        <strain>ATCC BAA-588 / NCTC 13252 / RB50</strain>
    </source>
</reference>
<reference key="3">
    <citation type="journal article" date="2019" name="Biochemistry">
        <title>Mechanism of 6-Hydroxynicotinate 3-Monooxygenase, a Flavin-Dependent Decarboxylative Hydroxylase Involved in Bacterial Nicotinic Acid Degradation.</title>
        <authorList>
            <person name="Nakamoto K.D."/>
            <person name="Perkins S.W."/>
            <person name="Campbell R.G."/>
            <person name="Bauerle M.R."/>
            <person name="Gerwig T.J."/>
            <person name="Gerislioglu S."/>
            <person name="Wesdemiotis C."/>
            <person name="Anderson M.A."/>
            <person name="Hicks K.A."/>
            <person name="Snider M.J."/>
        </authorList>
    </citation>
    <scope>FUNCTION</scope>
    <scope>CATALYTIC ACTIVITY</scope>
    <scope>BIOPHYSICOCHEMICAL PROPERTIES</scope>
    <scope>COFACTOR</scope>
    <scope>PATHWAY</scope>
    <scope>MUTAGENESIS OF HIS-47; CYS-201; HIS-210; TYR-214; TYR-224 AND HIS-301</scope>
    <scope>REACTION MECHANISM</scope>
    <scope>ACTIVE SITE</scope>
    <source>
        <strain>ATCC BAA-588 / NCTC 13252 / RB50</strain>
    </source>
</reference>
<keyword id="KW-0058">Aromatic hydrocarbons catabolism</keyword>
<keyword id="KW-0274">FAD</keyword>
<keyword id="KW-0285">Flavoprotein</keyword>
<keyword id="KW-0503">Monooxygenase</keyword>
<keyword id="KW-0520">NAD</keyword>
<keyword id="KW-0560">Oxidoreductase</keyword>
<keyword id="KW-0732">Signal</keyword>
<accession>A0A0H3LKL4</accession>
<sequence length="383" mass="42803">MQGKPRIAVIGAGLGGTAGAALMARAGFNVRLYEQAPAFSRLGAGIHLGPNVMKIMRRIGIEDELNRQGSHPDYWYSRDWQSGAELARIPLGDYAVSHYGATYLTVHRGDFHALMTAALPAGLLQFNKRLTRVDEDDDVVRLHFADGSVEEAEIVIGADGVNSRLREHLLGAELPKYTGYVAHRAVFPTPLDSGSLPFDMCVKWWSDDRHMMVYFVTGKRDEIYYVTGVPEQQWDMGKSWVPSSKAEMRAAFAGWHPTVQALIEATPEVSKWPLLERDPLPLWSRGRIVLLGDACHPMKPHMAQGAAMAIEDAAMLTRIFEQTGLQDHAAAFRLYEDNRAERASRVQRVSHDNTWLRTNENPDWCFGYDVYAEPLVEGRRAAA</sequence>
<organism>
    <name type="scientific">Bordetella bronchiseptica (strain ATCC BAA-588 / NCTC 13252 / RB50)</name>
    <name type="common">Alcaligenes bronchisepticus</name>
    <dbReference type="NCBI Taxonomy" id="257310"/>
    <lineage>
        <taxon>Bacteria</taxon>
        <taxon>Pseudomonadati</taxon>
        <taxon>Pseudomonadota</taxon>
        <taxon>Betaproteobacteria</taxon>
        <taxon>Burkholderiales</taxon>
        <taxon>Alcaligenaceae</taxon>
        <taxon>Bordetella</taxon>
    </lineage>
</organism>
<evidence type="ECO:0000250" key="1">
    <source>
        <dbReference type="UniProtKB" id="Q88FY2"/>
    </source>
</evidence>
<evidence type="ECO:0000255" key="2"/>
<evidence type="ECO:0000269" key="3">
    <source>
    </source>
</evidence>
<evidence type="ECO:0000269" key="4">
    <source>
    </source>
</evidence>
<evidence type="ECO:0000303" key="5">
    <source>
    </source>
</evidence>
<evidence type="ECO:0000303" key="6">
    <source>
    </source>
</evidence>
<evidence type="ECO:0000305" key="7"/>
<evidence type="ECO:0000305" key="8">
    <source>
    </source>
</evidence>
<evidence type="ECO:0000305" key="9">
    <source>
    </source>
</evidence>
<evidence type="ECO:0000312" key="10">
    <source>
        <dbReference type="EMBL" id="CAE32275.1"/>
    </source>
</evidence>
<feature type="signal peptide" evidence="2">
    <location>
        <begin position="1"/>
        <end position="26"/>
    </location>
</feature>
<feature type="chain" id="PRO_0000447475" description="6-hydroxynicotinate 3-monooxygenase">
    <location>
        <begin position="27"/>
        <end position="383"/>
    </location>
</feature>
<feature type="active site" description="Proton acceptor" evidence="9">
    <location>
        <position position="47"/>
    </location>
</feature>
<feature type="active site" description="Proton acceptor" evidence="9">
    <location>
        <position position="214"/>
    </location>
</feature>
<feature type="binding site" evidence="1">
    <location>
        <position position="15"/>
    </location>
    <ligand>
        <name>FAD</name>
        <dbReference type="ChEBI" id="CHEBI:57692"/>
    </ligand>
</feature>
<feature type="binding site" evidence="1">
    <location>
        <begin position="34"/>
        <end position="35"/>
    </location>
    <ligand>
        <name>FAD</name>
        <dbReference type="ChEBI" id="CHEBI:57692"/>
    </ligand>
</feature>
<feature type="binding site" evidence="1">
    <location>
        <position position="47"/>
    </location>
    <ligand>
        <name>FAD</name>
        <dbReference type="ChEBI" id="CHEBI:57692"/>
    </ligand>
</feature>
<feature type="binding site" evidence="1">
    <location>
        <position position="108"/>
    </location>
    <ligand>
        <name>FAD</name>
        <dbReference type="ChEBI" id="CHEBI:57692"/>
    </ligand>
</feature>
<feature type="binding site" evidence="1">
    <location>
        <position position="130"/>
    </location>
    <ligand>
        <name>FAD</name>
        <dbReference type="ChEBI" id="CHEBI:57692"/>
    </ligand>
</feature>
<feature type="binding site" evidence="1">
    <location>
        <position position="293"/>
    </location>
    <ligand>
        <name>FAD</name>
        <dbReference type="ChEBI" id="CHEBI:57692"/>
    </ligand>
</feature>
<feature type="binding site" evidence="1">
    <location>
        <begin position="306"/>
        <end position="307"/>
    </location>
    <ligand>
        <name>FAD</name>
        <dbReference type="ChEBI" id="CHEBI:57692"/>
    </ligand>
</feature>
<feature type="mutagenesis site" description="Unable to bind FAD." evidence="4">
    <original>H</original>
    <variation>A</variation>
    <variation>F</variation>
    <location>
        <position position="47"/>
    </location>
</feature>
<feature type="mutagenesis site" description="Almost complete loss of 6-HNA hydroxylation activity (0.02% of wild-type). Ability to oxidize NADH is also greatly diminished." evidence="4">
    <original>H</original>
    <variation>E</variation>
    <location>
        <position position="47"/>
    </location>
</feature>
<feature type="mutagenesis site" description="No significant loss of 6-HNA hydroxylation activity." evidence="4">
    <original>C</original>
    <variation>A</variation>
    <location>
        <position position="201"/>
    </location>
</feature>
<feature type="mutagenesis site" description="No significant loss of 6-HNA hydroxylation activity." evidence="4">
    <original>H</original>
    <variation>A</variation>
    <location>
        <position position="210"/>
    </location>
</feature>
<feature type="mutagenesis site" description="Great decrease in affinity for 6-hydroxynicotinate. Retains ability to oxidize NADH but its ability to transfer the hydroxyl group onto the organic substrate is greatly diminished (0.05% of wild-type)." evidence="4">
    <original>Y</original>
    <variation>F</variation>
    <location>
        <position position="214"/>
    </location>
</feature>
<feature type="mutagenesis site" description="No significant loss of 6-HNA hydroxylation activity." evidence="4">
    <original>Y</original>
    <variation>F</variation>
    <location>
        <position position="224"/>
    </location>
</feature>
<feature type="mutagenesis site" description="11-fold decrease in 6-HNA hydroxylation activity." evidence="4">
    <original>H</original>
    <variation>A</variation>
    <location>
        <position position="301"/>
    </location>
</feature>
<gene>
    <name evidence="6" type="primary">nicC</name>
    <name evidence="10" type="ordered locus">BB1778</name>
</gene>
<dbReference type="EC" id="1.14.13.114" evidence="3 4"/>
<dbReference type="EMBL" id="BX640442">
    <property type="protein sequence ID" value="CAE32275.1"/>
    <property type="molecule type" value="Genomic_DNA"/>
</dbReference>
<dbReference type="RefSeq" id="WP_010926295.1">
    <property type="nucleotide sequence ID" value="NC_002927.3"/>
</dbReference>
<dbReference type="SMR" id="A0A0H3LKL4"/>
<dbReference type="KEGG" id="bbr:BB1778"/>
<dbReference type="eggNOG" id="COG0654">
    <property type="taxonomic scope" value="Bacteria"/>
</dbReference>
<dbReference type="HOGENOM" id="CLU_009665_19_5_4"/>
<dbReference type="SABIO-RK" id="A0A0H3LKL4"/>
<dbReference type="UniPathway" id="UPA01010"/>
<dbReference type="Proteomes" id="UP000001027">
    <property type="component" value="Chromosome"/>
</dbReference>
<dbReference type="GO" id="GO:0043731">
    <property type="term" value="F:6-hydroxynicotinate 3-monooxygenase activity"/>
    <property type="evidence" value="ECO:0007669"/>
    <property type="project" value="UniProtKB-EC"/>
</dbReference>
<dbReference type="GO" id="GO:0071949">
    <property type="term" value="F:FAD binding"/>
    <property type="evidence" value="ECO:0007669"/>
    <property type="project" value="InterPro"/>
</dbReference>
<dbReference type="GO" id="GO:0009056">
    <property type="term" value="P:catabolic process"/>
    <property type="evidence" value="ECO:0007669"/>
    <property type="project" value="UniProtKB-KW"/>
</dbReference>
<dbReference type="FunFam" id="3.50.50.60:FF:000223">
    <property type="entry name" value="6-hydroxynicotinate 3-monooxygenase"/>
    <property type="match status" value="1"/>
</dbReference>
<dbReference type="Gene3D" id="3.50.50.60">
    <property type="entry name" value="FAD/NAD(P)-binding domain"/>
    <property type="match status" value="1"/>
</dbReference>
<dbReference type="InterPro" id="IPR002938">
    <property type="entry name" value="FAD-bd"/>
</dbReference>
<dbReference type="InterPro" id="IPR050493">
    <property type="entry name" value="FAD-dep_Monooxygenase_BioMet"/>
</dbReference>
<dbReference type="InterPro" id="IPR036188">
    <property type="entry name" value="FAD/NAD-bd_sf"/>
</dbReference>
<dbReference type="PANTHER" id="PTHR13789:SF318">
    <property type="entry name" value="GERANYLGERANYL DIPHOSPHATE REDUCTASE"/>
    <property type="match status" value="1"/>
</dbReference>
<dbReference type="PANTHER" id="PTHR13789">
    <property type="entry name" value="MONOOXYGENASE"/>
    <property type="match status" value="1"/>
</dbReference>
<dbReference type="Pfam" id="PF01494">
    <property type="entry name" value="FAD_binding_3"/>
    <property type="match status" value="1"/>
</dbReference>
<dbReference type="PRINTS" id="PR00420">
    <property type="entry name" value="RNGMNOXGNASE"/>
</dbReference>
<dbReference type="SUPFAM" id="SSF54373">
    <property type="entry name" value="FAD-linked reductases, C-terminal domain"/>
    <property type="match status" value="1"/>
</dbReference>
<dbReference type="SUPFAM" id="SSF51905">
    <property type="entry name" value="FAD/NAD(P)-binding domain"/>
    <property type="match status" value="1"/>
</dbReference>
<comment type="function">
    <text evidence="3 4">Flavin-dependent monooxygenase (FMO) that catalyzes the decarboxylative hydroxylation of 6-hydroxynicotinic acid (6-HNA) to 2,5-dihydroxypyridine (2,5-DHP) with concomitant oxidation of NADH, a step in the aerobic nicotinate degradation pathway (PubMed:27218267, PubMed:30810301). Is also active on the non-natural substrate 5-chloro-6-hydroxynicotinate, and is much less efficient on the substrate analog 4-hydroxybenzoate (PubMed:30810301).</text>
</comment>
<comment type="catalytic activity">
    <reaction evidence="4">
        <text>6-hydroxynicotinate + NADH + O2 + 2 H(+) = 2,5-dihydroxypyridine + CO2 + NAD(+) + H2O</text>
        <dbReference type="Rhea" id="RHEA:27333"/>
        <dbReference type="ChEBI" id="CHEBI:15377"/>
        <dbReference type="ChEBI" id="CHEBI:15378"/>
        <dbReference type="ChEBI" id="CHEBI:15379"/>
        <dbReference type="ChEBI" id="CHEBI:16364"/>
        <dbReference type="ChEBI" id="CHEBI:16526"/>
        <dbReference type="ChEBI" id="CHEBI:57540"/>
        <dbReference type="ChEBI" id="CHEBI:57664"/>
        <dbReference type="ChEBI" id="CHEBI:57945"/>
        <dbReference type="EC" id="1.14.13.114"/>
    </reaction>
</comment>
<comment type="cofactor">
    <cofactor evidence="4">
        <name>FAD</name>
        <dbReference type="ChEBI" id="CHEBI:57692"/>
    </cofactor>
    <text evidence="1">Binds 1 FAD molecule per subunit.</text>
</comment>
<comment type="activity regulation">
    <text evidence="3">Competitively inhibited by 6-hydroxynicotinaldehyde.</text>
</comment>
<comment type="biophysicochemical properties">
    <kinetics>
        <KM evidence="3">85 uM for 6-hydroxynicotinate (at pH 7.5 and 25 degrees Celsius)</KM>
        <KM evidence="3">6 uM for NADH (at pH 7.5 and 25 degrees Celsius)</KM>
        <KM evidence="4">118 uM for 6-hydroxynicotinate (at pH 7.5 and 25 degrees Celsius)</KM>
        <KM evidence="4">600 uM for 4-hydroxybenzoate (at pH 7.5 and 25 degrees Celsius)</KM>
        <KM evidence="4">3.9 uM for 5-chloro-6-hydroxynicotinate (at pH 7.5 and 25 degrees Celsius)</KM>
        <KM evidence="4">8.1 uM for NADH (at pH 7.5 and 25 degrees Celsius)</KM>
        <text evidence="3 4">kcat is 4.2 sec(-1) with 6-hydroxynicotinate as substrate (at pH 7.5 and 25 degrees Celsius) (PubMed:27218267). kcat is 5.1 sec(-1) with 6-hydroxynicotinate as substrate. kcat is 0.074 sec(-1) with 4-hydroxybenzoate as substrate. kcat is 2.18 sec(-1) with 5-chloro-6-hydroxynicotinate as substrate (at pH 7.5 and 25 degrees Celsius) (PubMed:30810301).</text>
    </kinetics>
    <phDependence>
        <text evidence="3">Optimum pH is around 7-8.</text>
    </phDependence>
</comment>
<comment type="pathway">
    <text evidence="8 9">Cofactor degradation; nicotinate degradation.</text>
</comment>
<comment type="subunit">
    <text evidence="3">Monomer.</text>
</comment>
<comment type="similarity">
    <text evidence="7">Belongs to the 6-hydroxynicotinate 3-monooxygenase family.</text>
</comment>
<name>6HN3M_BORBR</name>
<protein>
    <recommendedName>
        <fullName evidence="5 6">6-hydroxynicotinate 3-monooxygenase</fullName>
        <shortName evidence="5 6">6-HNA monooxygenase</shortName>
        <ecNumber evidence="3 4">1.14.13.114</ecNumber>
    </recommendedName>
</protein>